<keyword id="KW-0030">Aminoacyl-tRNA synthetase</keyword>
<keyword id="KW-0067">ATP-binding</keyword>
<keyword id="KW-0963">Cytoplasm</keyword>
<keyword id="KW-0436">Ligase</keyword>
<keyword id="KW-0547">Nucleotide-binding</keyword>
<keyword id="KW-0648">Protein biosynthesis</keyword>
<comment type="function">
    <text evidence="1">Aspartyl-tRNA synthetase with relaxed tRNA specificity since it is able to aspartylate not only its cognate tRNA(Asp) but also tRNA(Asn). Reaction proceeds in two steps: L-aspartate is first activated by ATP to form Asp-AMP and then transferred to the acceptor end of tRNA(Asp/Asn).</text>
</comment>
<comment type="catalytic activity">
    <reaction evidence="1">
        <text>tRNA(Asx) + L-aspartate + ATP = L-aspartyl-tRNA(Asx) + AMP + diphosphate</text>
        <dbReference type="Rhea" id="RHEA:18349"/>
        <dbReference type="Rhea" id="RHEA-COMP:9710"/>
        <dbReference type="Rhea" id="RHEA-COMP:9711"/>
        <dbReference type="ChEBI" id="CHEBI:29991"/>
        <dbReference type="ChEBI" id="CHEBI:30616"/>
        <dbReference type="ChEBI" id="CHEBI:33019"/>
        <dbReference type="ChEBI" id="CHEBI:78442"/>
        <dbReference type="ChEBI" id="CHEBI:78516"/>
        <dbReference type="ChEBI" id="CHEBI:456215"/>
        <dbReference type="EC" id="6.1.1.23"/>
    </reaction>
</comment>
<comment type="subunit">
    <text evidence="1">Homodimer.</text>
</comment>
<comment type="subcellular location">
    <subcellularLocation>
        <location evidence="1">Cytoplasm</location>
    </subcellularLocation>
</comment>
<comment type="similarity">
    <text evidence="1">Belongs to the class-II aminoacyl-tRNA synthetase family. Type 1 subfamily.</text>
</comment>
<proteinExistence type="inferred from homology"/>
<reference key="1">
    <citation type="submission" date="2007-10" db="EMBL/GenBank/DDBJ databases">
        <title>Genome sequence of Campylobacter concisus 13826 isolated from human feces.</title>
        <authorList>
            <person name="Fouts D.E."/>
            <person name="Mongodin E.F."/>
            <person name="Puiu D."/>
            <person name="Sebastian Y."/>
            <person name="Miller W.G."/>
            <person name="Mandrell R.E."/>
            <person name="On S."/>
            <person name="Nelson K.E."/>
        </authorList>
    </citation>
    <scope>NUCLEOTIDE SEQUENCE [LARGE SCALE GENOMIC DNA]</scope>
    <source>
        <strain>13826</strain>
    </source>
</reference>
<accession>A7ZEH3</accession>
<feature type="chain" id="PRO_1000006654" description="Aspartate--tRNA(Asp/Asn) ligase">
    <location>
        <begin position="1"/>
        <end position="585"/>
    </location>
</feature>
<feature type="region of interest" description="Aspartate" evidence="1">
    <location>
        <begin position="197"/>
        <end position="200"/>
    </location>
</feature>
<feature type="binding site" evidence="1">
    <location>
        <position position="173"/>
    </location>
    <ligand>
        <name>L-aspartate</name>
        <dbReference type="ChEBI" id="CHEBI:29991"/>
    </ligand>
</feature>
<feature type="binding site" evidence="1">
    <location>
        <begin position="219"/>
        <end position="221"/>
    </location>
    <ligand>
        <name>ATP</name>
        <dbReference type="ChEBI" id="CHEBI:30616"/>
    </ligand>
</feature>
<feature type="binding site" evidence="1">
    <location>
        <position position="219"/>
    </location>
    <ligand>
        <name>L-aspartate</name>
        <dbReference type="ChEBI" id="CHEBI:29991"/>
    </ligand>
</feature>
<feature type="binding site" evidence="1">
    <location>
        <position position="228"/>
    </location>
    <ligand>
        <name>ATP</name>
        <dbReference type="ChEBI" id="CHEBI:30616"/>
    </ligand>
</feature>
<feature type="binding site" evidence="1">
    <location>
        <position position="447"/>
    </location>
    <ligand>
        <name>L-aspartate</name>
        <dbReference type="ChEBI" id="CHEBI:29991"/>
    </ligand>
</feature>
<feature type="binding site" evidence="1">
    <location>
        <position position="477"/>
    </location>
    <ligand>
        <name>ATP</name>
        <dbReference type="ChEBI" id="CHEBI:30616"/>
    </ligand>
</feature>
<feature type="binding site" evidence="1">
    <location>
        <position position="484"/>
    </location>
    <ligand>
        <name>L-aspartate</name>
        <dbReference type="ChEBI" id="CHEBI:29991"/>
    </ligand>
</feature>
<feature type="binding site" evidence="1">
    <location>
        <begin position="529"/>
        <end position="532"/>
    </location>
    <ligand>
        <name>ATP</name>
        <dbReference type="ChEBI" id="CHEBI:30616"/>
    </ligand>
</feature>
<feature type="site" description="Important for tRNA non-discrimination" evidence="1">
    <location>
        <position position="30"/>
    </location>
</feature>
<feature type="site" description="Important for tRNA non-discrimination" evidence="1">
    <location>
        <position position="82"/>
    </location>
</feature>
<dbReference type="EC" id="6.1.1.23" evidence="1"/>
<dbReference type="EMBL" id="CP000792">
    <property type="protein sequence ID" value="EAT98758.1"/>
    <property type="molecule type" value="Genomic_DNA"/>
</dbReference>
<dbReference type="RefSeq" id="WP_012140086.1">
    <property type="nucleotide sequence ID" value="NC_009802.2"/>
</dbReference>
<dbReference type="SMR" id="A7ZEH3"/>
<dbReference type="STRING" id="360104.CCC13826_1981"/>
<dbReference type="KEGG" id="cco:CCC13826_1981"/>
<dbReference type="eggNOG" id="COG0173">
    <property type="taxonomic scope" value="Bacteria"/>
</dbReference>
<dbReference type="HOGENOM" id="CLU_014330_3_2_7"/>
<dbReference type="OrthoDB" id="9802326at2"/>
<dbReference type="Proteomes" id="UP000001121">
    <property type="component" value="Chromosome"/>
</dbReference>
<dbReference type="GO" id="GO:0005737">
    <property type="term" value="C:cytoplasm"/>
    <property type="evidence" value="ECO:0007669"/>
    <property type="project" value="UniProtKB-SubCell"/>
</dbReference>
<dbReference type="GO" id="GO:0004815">
    <property type="term" value="F:aspartate-tRNA ligase activity"/>
    <property type="evidence" value="ECO:0007669"/>
    <property type="project" value="UniProtKB-UniRule"/>
</dbReference>
<dbReference type="GO" id="GO:0050560">
    <property type="term" value="F:aspartate-tRNA(Asn) ligase activity"/>
    <property type="evidence" value="ECO:0007669"/>
    <property type="project" value="UniProtKB-EC"/>
</dbReference>
<dbReference type="GO" id="GO:0005524">
    <property type="term" value="F:ATP binding"/>
    <property type="evidence" value="ECO:0007669"/>
    <property type="project" value="UniProtKB-UniRule"/>
</dbReference>
<dbReference type="GO" id="GO:0003676">
    <property type="term" value="F:nucleic acid binding"/>
    <property type="evidence" value="ECO:0007669"/>
    <property type="project" value="InterPro"/>
</dbReference>
<dbReference type="GO" id="GO:0006422">
    <property type="term" value="P:aspartyl-tRNA aminoacylation"/>
    <property type="evidence" value="ECO:0007669"/>
    <property type="project" value="UniProtKB-UniRule"/>
</dbReference>
<dbReference type="CDD" id="cd00777">
    <property type="entry name" value="AspRS_core"/>
    <property type="match status" value="1"/>
</dbReference>
<dbReference type="CDD" id="cd04317">
    <property type="entry name" value="EcAspRS_like_N"/>
    <property type="match status" value="1"/>
</dbReference>
<dbReference type="Gene3D" id="3.30.930.10">
    <property type="entry name" value="Bira Bifunctional Protein, Domain 2"/>
    <property type="match status" value="1"/>
</dbReference>
<dbReference type="Gene3D" id="3.30.1360.30">
    <property type="entry name" value="GAD-like domain"/>
    <property type="match status" value="1"/>
</dbReference>
<dbReference type="Gene3D" id="2.40.50.140">
    <property type="entry name" value="Nucleic acid-binding proteins"/>
    <property type="match status" value="1"/>
</dbReference>
<dbReference type="HAMAP" id="MF_00044">
    <property type="entry name" value="Asp_tRNA_synth_type1"/>
    <property type="match status" value="1"/>
</dbReference>
<dbReference type="InterPro" id="IPR004364">
    <property type="entry name" value="Aa-tRNA-synt_II"/>
</dbReference>
<dbReference type="InterPro" id="IPR006195">
    <property type="entry name" value="aa-tRNA-synth_II"/>
</dbReference>
<dbReference type="InterPro" id="IPR045864">
    <property type="entry name" value="aa-tRNA-synth_II/BPL/LPL"/>
</dbReference>
<dbReference type="InterPro" id="IPR004524">
    <property type="entry name" value="Asp-tRNA-ligase_1"/>
</dbReference>
<dbReference type="InterPro" id="IPR047089">
    <property type="entry name" value="Asp-tRNA-ligase_1_N"/>
</dbReference>
<dbReference type="InterPro" id="IPR002312">
    <property type="entry name" value="Asp/Asn-tRNA-synth_IIb"/>
</dbReference>
<dbReference type="InterPro" id="IPR047090">
    <property type="entry name" value="AspRS_core"/>
</dbReference>
<dbReference type="InterPro" id="IPR004115">
    <property type="entry name" value="GAD-like_sf"/>
</dbReference>
<dbReference type="InterPro" id="IPR029351">
    <property type="entry name" value="GAD_dom"/>
</dbReference>
<dbReference type="InterPro" id="IPR012340">
    <property type="entry name" value="NA-bd_OB-fold"/>
</dbReference>
<dbReference type="InterPro" id="IPR004365">
    <property type="entry name" value="NA-bd_OB_tRNA"/>
</dbReference>
<dbReference type="NCBIfam" id="TIGR00459">
    <property type="entry name" value="aspS_bact"/>
    <property type="match status" value="1"/>
</dbReference>
<dbReference type="NCBIfam" id="NF001750">
    <property type="entry name" value="PRK00476.1"/>
    <property type="match status" value="1"/>
</dbReference>
<dbReference type="PANTHER" id="PTHR22594:SF5">
    <property type="entry name" value="ASPARTATE--TRNA LIGASE, MITOCHONDRIAL"/>
    <property type="match status" value="1"/>
</dbReference>
<dbReference type="PANTHER" id="PTHR22594">
    <property type="entry name" value="ASPARTYL/LYSYL-TRNA SYNTHETASE"/>
    <property type="match status" value="1"/>
</dbReference>
<dbReference type="Pfam" id="PF02938">
    <property type="entry name" value="GAD"/>
    <property type="match status" value="1"/>
</dbReference>
<dbReference type="Pfam" id="PF00152">
    <property type="entry name" value="tRNA-synt_2"/>
    <property type="match status" value="1"/>
</dbReference>
<dbReference type="Pfam" id="PF01336">
    <property type="entry name" value="tRNA_anti-codon"/>
    <property type="match status" value="1"/>
</dbReference>
<dbReference type="PRINTS" id="PR01042">
    <property type="entry name" value="TRNASYNTHASP"/>
</dbReference>
<dbReference type="SUPFAM" id="SSF55681">
    <property type="entry name" value="Class II aaRS and biotin synthetases"/>
    <property type="match status" value="1"/>
</dbReference>
<dbReference type="SUPFAM" id="SSF55261">
    <property type="entry name" value="GAD domain-like"/>
    <property type="match status" value="1"/>
</dbReference>
<dbReference type="SUPFAM" id="SSF50249">
    <property type="entry name" value="Nucleic acid-binding proteins"/>
    <property type="match status" value="1"/>
</dbReference>
<dbReference type="PROSITE" id="PS50862">
    <property type="entry name" value="AA_TRNA_LIGASE_II"/>
    <property type="match status" value="1"/>
</dbReference>
<sequence length="585" mass="66863">MRSHYCTDLSKADIGKEVILCGWANTYRDHGGVVFIDLRDVSGLIQLVCDPADSKEAHDVAAKVRDEYVLKAKGKVRARGEGLTNPKLKTGEIEVIVSELIIENPSEPLPFMIGDESVNEDIRLKYRFLDLRSERLQNIFKMRSRAAIAARNSLDKMGFIEFETPVLTRATPEGARDYLVPSRVYPGQFYALPQSPQLFKQLLMCSGFDKYFQIAKCFRDEDLRADRQPEFTQIDIEMSFVEQEDIINMAETMLKDIFKACGHDIKTPFRRMSYKEATETYGSDKPDLRYDLKMIDVIDIFERSSNEIFSSIAKDKKKNRIKALKVPNGDNIFSKREMNRFEEFVRKFGAQGLGYFQMKEDGLKGPLCKFFEQSDLDEIVSRCELKVGDVVFFGAGKKKIVLDYMGRFRIFLAEQMGIIDQDRLEFLWVLDFPMFEQNDDGSYSAMHHPFTMPKNIDEPDLEDILSIAHDVVLNGFELGGGSIRIHKNDIQQKVFKLLGIDEAEQREKFGFLLDALTFGAPPHGGIAIGFDRLNMLVNKASSIRDVIAFPKTQRAQCPLTKAPSYASNEQLRELGLRIREKEQKA</sequence>
<protein>
    <recommendedName>
        <fullName evidence="1">Aspartate--tRNA(Asp/Asn) ligase</fullName>
        <ecNumber evidence="1">6.1.1.23</ecNumber>
    </recommendedName>
    <alternativeName>
        <fullName evidence="1">Aspartyl-tRNA synthetase</fullName>
        <shortName evidence="1">AspRS</shortName>
    </alternativeName>
    <alternativeName>
        <fullName evidence="1">Non-discriminating aspartyl-tRNA synthetase</fullName>
        <shortName evidence="1">ND-AspRS</shortName>
    </alternativeName>
</protein>
<gene>
    <name evidence="1" type="primary">aspS</name>
    <name type="ordered locus">Ccon26_13320</name>
    <name type="ORF">CCC13826_1981</name>
</gene>
<evidence type="ECO:0000255" key="1">
    <source>
        <dbReference type="HAMAP-Rule" id="MF_00044"/>
    </source>
</evidence>
<name>SYDND_CAMC1</name>
<organism>
    <name type="scientific">Campylobacter concisus (strain 13826)</name>
    <dbReference type="NCBI Taxonomy" id="360104"/>
    <lineage>
        <taxon>Bacteria</taxon>
        <taxon>Pseudomonadati</taxon>
        <taxon>Campylobacterota</taxon>
        <taxon>Epsilonproteobacteria</taxon>
        <taxon>Campylobacterales</taxon>
        <taxon>Campylobacteraceae</taxon>
        <taxon>Campylobacter</taxon>
    </lineage>
</organism>